<evidence type="ECO:0000255" key="1">
    <source>
        <dbReference type="PROSITE-ProRule" id="PRU01185"/>
    </source>
</evidence>
<evidence type="ECO:0000256" key="2">
    <source>
        <dbReference type="SAM" id="MobiDB-lite"/>
    </source>
</evidence>
<evidence type="ECO:0000269" key="3">
    <source>
    </source>
</evidence>
<evidence type="ECO:0000305" key="4"/>
<evidence type="ECO:0000305" key="5">
    <source>
    </source>
</evidence>
<accession>Q8SYG2</accession>
<accession>Q9VPA3</accession>
<accession>Q9XYW4</accession>
<sequence>MGSALENYVNQVRTLSASGSYRELAEELPESLSLLARNWSILDNVLETLDMQQHSLGVLYVLLAKLHSASTANPEPVQLIQLMRDFVQRNNNEQLRYAVCAFYETCHLFTEFVVQKNLSILGIRIISRAIDQIRQLETQLTPIHADLCLLSLKAKNFSVVLPYLDADITDISTVAAECKTQQQQQSQHADANNDAKYFLLYFYYGGMIYTAVKNYERALYFFEVCITTPAMAMSHIMLEAYKKFLMVSLIVEGKIAYIPKNTQVIGRFMKPMANHYHDLVNVYANSSSEELRIIILKYSEAFTRDNNMGLAKQVATSLYKRNIQRLTKTFLTLSLSDVASRVQLASAVEAERYILNMIKSGEIYASINQKDGMVLFKDDPEKYNSPEMFLNVQNNITHVLDQVRQINKMEEEIILNPMYVKKALGSQDDDLTSQHPKTFSGDPTD</sequence>
<feature type="chain" id="PRO_0000120983" description="COP9 signalosome complex subunit 3">
    <location>
        <begin position="1"/>
        <end position="445"/>
    </location>
</feature>
<feature type="domain" description="PCI" evidence="1">
    <location>
        <begin position="217"/>
        <end position="381"/>
    </location>
</feature>
<feature type="region of interest" description="Disordered" evidence="2">
    <location>
        <begin position="426"/>
        <end position="445"/>
    </location>
</feature>
<feature type="compositionally biased region" description="Polar residues" evidence="2">
    <location>
        <begin position="433"/>
        <end position="445"/>
    </location>
</feature>
<feature type="sequence conflict" description="In Ref. 1; AAD28606." evidence="4" ref="1">
    <original>E</original>
    <variation>K</variation>
    <location>
        <position position="104"/>
    </location>
</feature>
<feature type="sequence conflict" description="In Ref. 1; AAD28606." evidence="4" ref="1">
    <original>V</original>
    <variation>A</variation>
    <location>
        <position position="160"/>
    </location>
</feature>
<feature type="sequence conflict" description="In Ref. 1; AAD28606." evidence="4" ref="1">
    <original>H</original>
    <variation>Y</variation>
    <location>
        <position position="275"/>
    </location>
</feature>
<feature type="sequence conflict" description="In Ref. 4; AAL49197." evidence="4" ref="4">
    <original>Q</original>
    <variation>H</variation>
    <location>
        <position position="343"/>
    </location>
</feature>
<feature type="sequence conflict" description="In Ref. 1; AAD28606." evidence="4" ref="1">
    <original>D</original>
    <variation>E</variation>
    <location>
        <position position="428"/>
    </location>
</feature>
<protein>
    <recommendedName>
        <fullName>COP9 signalosome complex subunit 3</fullName>
        <shortName>Dch3</shortName>
        <shortName>Signalosome subunit 3</shortName>
    </recommendedName>
</protein>
<organism>
    <name type="scientific">Drosophila melanogaster</name>
    <name type="common">Fruit fly</name>
    <dbReference type="NCBI Taxonomy" id="7227"/>
    <lineage>
        <taxon>Eukaryota</taxon>
        <taxon>Metazoa</taxon>
        <taxon>Ecdysozoa</taxon>
        <taxon>Arthropoda</taxon>
        <taxon>Hexapoda</taxon>
        <taxon>Insecta</taxon>
        <taxon>Pterygota</taxon>
        <taxon>Neoptera</taxon>
        <taxon>Endopterygota</taxon>
        <taxon>Diptera</taxon>
        <taxon>Brachycera</taxon>
        <taxon>Muscomorpha</taxon>
        <taxon>Ephydroidea</taxon>
        <taxon>Drosophilidae</taxon>
        <taxon>Drosophila</taxon>
        <taxon>Sophophora</taxon>
    </lineage>
</organism>
<keyword id="KW-0963">Cytoplasm</keyword>
<keyword id="KW-0217">Developmental protein</keyword>
<keyword id="KW-0221">Differentiation</keyword>
<keyword id="KW-0539">Nucleus</keyword>
<keyword id="KW-0896">Oogenesis</keyword>
<keyword id="KW-1185">Reference proteome</keyword>
<keyword id="KW-0736">Signalosome</keyword>
<dbReference type="EMBL" id="AF129081">
    <property type="protein sequence ID" value="AAD28606.1"/>
    <property type="molecule type" value="mRNA"/>
</dbReference>
<dbReference type="EMBL" id="AE014296">
    <property type="protein sequence ID" value="AAF51652.1"/>
    <property type="molecule type" value="Genomic_DNA"/>
</dbReference>
<dbReference type="EMBL" id="AY071575">
    <property type="protein sequence ID" value="AAL49197.1"/>
    <property type="molecule type" value="mRNA"/>
</dbReference>
<dbReference type="RefSeq" id="NP_524190.2">
    <property type="nucleotide sequence ID" value="NM_079466.3"/>
</dbReference>
<dbReference type="SMR" id="Q8SYG2"/>
<dbReference type="BioGRID" id="65565">
    <property type="interactions" value="20"/>
</dbReference>
<dbReference type="ComplexPortal" id="CPX-7964">
    <property type="entry name" value="COP9 signalosome complex, testis-specific variant"/>
</dbReference>
<dbReference type="ComplexPortal" id="CPX-7974">
    <property type="entry name" value="COP9 signalosome complex"/>
</dbReference>
<dbReference type="FunCoup" id="Q8SYG2">
    <property type="interactions" value="2459"/>
</dbReference>
<dbReference type="IntAct" id="Q8SYG2">
    <property type="interactions" value="17"/>
</dbReference>
<dbReference type="STRING" id="7227.FBpp0077927"/>
<dbReference type="PaxDb" id="7227-FBpp0077927"/>
<dbReference type="EnsemblMetazoa" id="FBtr0078269">
    <property type="protein sequence ID" value="FBpp0077927"/>
    <property type="gene ID" value="FBgn0027055"/>
</dbReference>
<dbReference type="GeneID" id="40308"/>
<dbReference type="KEGG" id="dme:Dmel_CG18332"/>
<dbReference type="AGR" id="FB:FBgn0027055"/>
<dbReference type="CTD" id="1448"/>
<dbReference type="FlyBase" id="FBgn0027055">
    <property type="gene designation" value="CSN3"/>
</dbReference>
<dbReference type="VEuPathDB" id="VectorBase:FBgn0027055"/>
<dbReference type="eggNOG" id="KOG2582">
    <property type="taxonomic scope" value="Eukaryota"/>
</dbReference>
<dbReference type="GeneTree" id="ENSGT00940000153653"/>
<dbReference type="HOGENOM" id="CLU_028825_0_1_1"/>
<dbReference type="InParanoid" id="Q8SYG2"/>
<dbReference type="OMA" id="NHYHDLV"/>
<dbReference type="OrthoDB" id="29061at2759"/>
<dbReference type="PhylomeDB" id="Q8SYG2"/>
<dbReference type="Reactome" id="R-DME-5696394">
    <property type="pathway name" value="DNA Damage Recognition in GG-NER"/>
</dbReference>
<dbReference type="Reactome" id="R-DME-6781823">
    <property type="pathway name" value="Formation of TC-NER Pre-Incision Complex"/>
</dbReference>
<dbReference type="Reactome" id="R-DME-8856825">
    <property type="pathway name" value="Cargo recognition for clathrin-mediated endocytosis"/>
</dbReference>
<dbReference type="Reactome" id="R-DME-8951664">
    <property type="pathway name" value="Neddylation"/>
</dbReference>
<dbReference type="BioGRID-ORCS" id="40308">
    <property type="hits" value="0 hits in 1 CRISPR screen"/>
</dbReference>
<dbReference type="GenomeRNAi" id="40308"/>
<dbReference type="PRO" id="PR:Q8SYG2"/>
<dbReference type="Proteomes" id="UP000000803">
    <property type="component" value="Chromosome 3L"/>
</dbReference>
<dbReference type="Bgee" id="FBgn0027055">
    <property type="expression patterns" value="Expressed in embryonic/larval hemocyte (Drosophila) and 108 other cell types or tissues"/>
</dbReference>
<dbReference type="ExpressionAtlas" id="Q8SYG2">
    <property type="expression patterns" value="baseline and differential"/>
</dbReference>
<dbReference type="GO" id="GO:0008180">
    <property type="term" value="C:COP9 signalosome"/>
    <property type="evidence" value="ECO:0000250"/>
    <property type="project" value="FlyBase"/>
</dbReference>
<dbReference type="GO" id="GO:0005737">
    <property type="term" value="C:cytoplasm"/>
    <property type="evidence" value="ECO:0007669"/>
    <property type="project" value="UniProtKB-SubCell"/>
</dbReference>
<dbReference type="GO" id="GO:0036099">
    <property type="term" value="P:female germ-line stem cell population maintenance"/>
    <property type="evidence" value="ECO:0000315"/>
    <property type="project" value="FlyBase"/>
</dbReference>
<dbReference type="GO" id="GO:0007281">
    <property type="term" value="P:germ cell development"/>
    <property type="evidence" value="ECO:0000315"/>
    <property type="project" value="FlyBase"/>
</dbReference>
<dbReference type="GO" id="GO:0048142">
    <property type="term" value="P:germarium-derived cystoblast division"/>
    <property type="evidence" value="ECO:0000315"/>
    <property type="project" value="FlyBase"/>
</dbReference>
<dbReference type="GO" id="GO:0048140">
    <property type="term" value="P:male germ-line cyst encapsulation"/>
    <property type="evidence" value="ECO:0000315"/>
    <property type="project" value="FlyBase"/>
</dbReference>
<dbReference type="GO" id="GO:0000338">
    <property type="term" value="P:protein deneddylation"/>
    <property type="evidence" value="ECO:0000250"/>
    <property type="project" value="FlyBase"/>
</dbReference>
<dbReference type="GO" id="GO:0050821">
    <property type="term" value="P:protein stabilization"/>
    <property type="evidence" value="ECO:0000315"/>
    <property type="project" value="FlyBase"/>
</dbReference>
<dbReference type="GO" id="GO:0006511">
    <property type="term" value="P:ubiquitin-dependent protein catabolic process"/>
    <property type="evidence" value="ECO:0000318"/>
    <property type="project" value="GO_Central"/>
</dbReference>
<dbReference type="FunFam" id="1.10.10.10:FF:000354">
    <property type="entry name" value="COP9 signalosome complex subunit 3"/>
    <property type="match status" value="1"/>
</dbReference>
<dbReference type="FunFam" id="1.25.40.570:FF:000032">
    <property type="entry name" value="GD12156"/>
    <property type="match status" value="1"/>
</dbReference>
<dbReference type="Gene3D" id="1.25.40.570">
    <property type="match status" value="1"/>
</dbReference>
<dbReference type="InterPro" id="IPR055089">
    <property type="entry name" value="COP9_N"/>
</dbReference>
<dbReference type="InterPro" id="IPR050756">
    <property type="entry name" value="CSN3"/>
</dbReference>
<dbReference type="InterPro" id="IPR000717">
    <property type="entry name" value="PCI_dom"/>
</dbReference>
<dbReference type="InterPro" id="IPR036390">
    <property type="entry name" value="WH_DNA-bd_sf"/>
</dbReference>
<dbReference type="PANTHER" id="PTHR10758">
    <property type="entry name" value="26S PROTEASOME NON-ATPASE REGULATORY SUBUNIT 3/COP9 SIGNALOSOME COMPLEX SUBUNIT 3"/>
    <property type="match status" value="1"/>
</dbReference>
<dbReference type="PANTHER" id="PTHR10758:SF1">
    <property type="entry name" value="COP9 SIGNALOSOME COMPLEX SUBUNIT 3"/>
    <property type="match status" value="1"/>
</dbReference>
<dbReference type="Pfam" id="PF22788">
    <property type="entry name" value="COP9_hel_rpt"/>
    <property type="match status" value="1"/>
</dbReference>
<dbReference type="Pfam" id="PF01399">
    <property type="entry name" value="PCI"/>
    <property type="match status" value="1"/>
</dbReference>
<dbReference type="SMART" id="SM00088">
    <property type="entry name" value="PINT"/>
    <property type="match status" value="1"/>
</dbReference>
<dbReference type="SUPFAM" id="SSF46785">
    <property type="entry name" value="Winged helix' DNA-binding domain"/>
    <property type="match status" value="1"/>
</dbReference>
<dbReference type="PROSITE" id="PS50250">
    <property type="entry name" value="PCI"/>
    <property type="match status" value="1"/>
</dbReference>
<proteinExistence type="evidence at transcript level"/>
<gene>
    <name type="primary">CSN3</name>
    <name type="ORF">CG18332</name>
</gene>
<reference key="1">
    <citation type="journal article" date="1999" name="Curr. Biol.">
        <title>The COP9 signalosome is essential for development of Drosophila melanogaster.</title>
        <authorList>
            <person name="Freilich S."/>
            <person name="Oron E."/>
            <person name="Kapp Y."/>
            <person name="Nevo-Caspi Y."/>
            <person name="Orgad S."/>
            <person name="Segal D."/>
            <person name="Chamovitz D.A."/>
        </authorList>
    </citation>
    <scope>NUCLEOTIDE SEQUENCE</scope>
    <scope>SUBCELLULAR LOCATION</scope>
    <scope>PROBABLE COMPOSITION OF THE CSN COMPLEX</scope>
</reference>
<reference key="2">
    <citation type="journal article" date="2000" name="Science">
        <title>The genome sequence of Drosophila melanogaster.</title>
        <authorList>
            <person name="Adams M.D."/>
            <person name="Celniker S.E."/>
            <person name="Holt R.A."/>
            <person name="Evans C.A."/>
            <person name="Gocayne J.D."/>
            <person name="Amanatides P.G."/>
            <person name="Scherer S.E."/>
            <person name="Li P.W."/>
            <person name="Hoskins R.A."/>
            <person name="Galle R.F."/>
            <person name="George R.A."/>
            <person name="Lewis S.E."/>
            <person name="Richards S."/>
            <person name="Ashburner M."/>
            <person name="Henderson S.N."/>
            <person name="Sutton G.G."/>
            <person name="Wortman J.R."/>
            <person name="Yandell M.D."/>
            <person name="Zhang Q."/>
            <person name="Chen L.X."/>
            <person name="Brandon R.C."/>
            <person name="Rogers Y.-H.C."/>
            <person name="Blazej R.G."/>
            <person name="Champe M."/>
            <person name="Pfeiffer B.D."/>
            <person name="Wan K.H."/>
            <person name="Doyle C."/>
            <person name="Baxter E.G."/>
            <person name="Helt G."/>
            <person name="Nelson C.R."/>
            <person name="Miklos G.L.G."/>
            <person name="Abril J.F."/>
            <person name="Agbayani A."/>
            <person name="An H.-J."/>
            <person name="Andrews-Pfannkoch C."/>
            <person name="Baldwin D."/>
            <person name="Ballew R.M."/>
            <person name="Basu A."/>
            <person name="Baxendale J."/>
            <person name="Bayraktaroglu L."/>
            <person name="Beasley E.M."/>
            <person name="Beeson K.Y."/>
            <person name="Benos P.V."/>
            <person name="Berman B.P."/>
            <person name="Bhandari D."/>
            <person name="Bolshakov S."/>
            <person name="Borkova D."/>
            <person name="Botchan M.R."/>
            <person name="Bouck J."/>
            <person name="Brokstein P."/>
            <person name="Brottier P."/>
            <person name="Burtis K.C."/>
            <person name="Busam D.A."/>
            <person name="Butler H."/>
            <person name="Cadieu E."/>
            <person name="Center A."/>
            <person name="Chandra I."/>
            <person name="Cherry J.M."/>
            <person name="Cawley S."/>
            <person name="Dahlke C."/>
            <person name="Davenport L.B."/>
            <person name="Davies P."/>
            <person name="de Pablos B."/>
            <person name="Delcher A."/>
            <person name="Deng Z."/>
            <person name="Mays A.D."/>
            <person name="Dew I."/>
            <person name="Dietz S.M."/>
            <person name="Dodson K."/>
            <person name="Doup L.E."/>
            <person name="Downes M."/>
            <person name="Dugan-Rocha S."/>
            <person name="Dunkov B.C."/>
            <person name="Dunn P."/>
            <person name="Durbin K.J."/>
            <person name="Evangelista C.C."/>
            <person name="Ferraz C."/>
            <person name="Ferriera S."/>
            <person name="Fleischmann W."/>
            <person name="Fosler C."/>
            <person name="Gabrielian A.E."/>
            <person name="Garg N.S."/>
            <person name="Gelbart W.M."/>
            <person name="Glasser K."/>
            <person name="Glodek A."/>
            <person name="Gong F."/>
            <person name="Gorrell J.H."/>
            <person name="Gu Z."/>
            <person name="Guan P."/>
            <person name="Harris M."/>
            <person name="Harris N.L."/>
            <person name="Harvey D.A."/>
            <person name="Heiman T.J."/>
            <person name="Hernandez J.R."/>
            <person name="Houck J."/>
            <person name="Hostin D."/>
            <person name="Houston K.A."/>
            <person name="Howland T.J."/>
            <person name="Wei M.-H."/>
            <person name="Ibegwam C."/>
            <person name="Jalali M."/>
            <person name="Kalush F."/>
            <person name="Karpen G.H."/>
            <person name="Ke Z."/>
            <person name="Kennison J.A."/>
            <person name="Ketchum K.A."/>
            <person name="Kimmel B.E."/>
            <person name="Kodira C.D."/>
            <person name="Kraft C.L."/>
            <person name="Kravitz S."/>
            <person name="Kulp D."/>
            <person name="Lai Z."/>
            <person name="Lasko P."/>
            <person name="Lei Y."/>
            <person name="Levitsky A.A."/>
            <person name="Li J.H."/>
            <person name="Li Z."/>
            <person name="Liang Y."/>
            <person name="Lin X."/>
            <person name="Liu X."/>
            <person name="Mattei B."/>
            <person name="McIntosh T.C."/>
            <person name="McLeod M.P."/>
            <person name="McPherson D."/>
            <person name="Merkulov G."/>
            <person name="Milshina N.V."/>
            <person name="Mobarry C."/>
            <person name="Morris J."/>
            <person name="Moshrefi A."/>
            <person name="Mount S.M."/>
            <person name="Moy M."/>
            <person name="Murphy B."/>
            <person name="Murphy L."/>
            <person name="Muzny D.M."/>
            <person name="Nelson D.L."/>
            <person name="Nelson D.R."/>
            <person name="Nelson K.A."/>
            <person name="Nixon K."/>
            <person name="Nusskern D.R."/>
            <person name="Pacleb J.M."/>
            <person name="Palazzolo M."/>
            <person name="Pittman G.S."/>
            <person name="Pan S."/>
            <person name="Pollard J."/>
            <person name="Puri V."/>
            <person name="Reese M.G."/>
            <person name="Reinert K."/>
            <person name="Remington K."/>
            <person name="Saunders R.D.C."/>
            <person name="Scheeler F."/>
            <person name="Shen H."/>
            <person name="Shue B.C."/>
            <person name="Siden-Kiamos I."/>
            <person name="Simpson M."/>
            <person name="Skupski M.P."/>
            <person name="Smith T.J."/>
            <person name="Spier E."/>
            <person name="Spradling A.C."/>
            <person name="Stapleton M."/>
            <person name="Strong R."/>
            <person name="Sun E."/>
            <person name="Svirskas R."/>
            <person name="Tector C."/>
            <person name="Turner R."/>
            <person name="Venter E."/>
            <person name="Wang A.H."/>
            <person name="Wang X."/>
            <person name="Wang Z.-Y."/>
            <person name="Wassarman D.A."/>
            <person name="Weinstock G.M."/>
            <person name="Weissenbach J."/>
            <person name="Williams S.M."/>
            <person name="Woodage T."/>
            <person name="Worley K.C."/>
            <person name="Wu D."/>
            <person name="Yang S."/>
            <person name="Yao Q.A."/>
            <person name="Ye J."/>
            <person name="Yeh R.-F."/>
            <person name="Zaveri J.S."/>
            <person name="Zhan M."/>
            <person name="Zhang G."/>
            <person name="Zhao Q."/>
            <person name="Zheng L."/>
            <person name="Zheng X.H."/>
            <person name="Zhong F.N."/>
            <person name="Zhong W."/>
            <person name="Zhou X."/>
            <person name="Zhu S.C."/>
            <person name="Zhu X."/>
            <person name="Smith H.O."/>
            <person name="Gibbs R.A."/>
            <person name="Myers E.W."/>
            <person name="Rubin G.M."/>
            <person name="Venter J.C."/>
        </authorList>
    </citation>
    <scope>NUCLEOTIDE SEQUENCE [LARGE SCALE GENOMIC DNA]</scope>
    <source>
        <strain>Berkeley</strain>
    </source>
</reference>
<reference key="3">
    <citation type="journal article" date="2002" name="Genome Biol.">
        <title>Annotation of the Drosophila melanogaster euchromatic genome: a systematic review.</title>
        <authorList>
            <person name="Misra S."/>
            <person name="Crosby M.A."/>
            <person name="Mungall C.J."/>
            <person name="Matthews B.B."/>
            <person name="Campbell K.S."/>
            <person name="Hradecky P."/>
            <person name="Huang Y."/>
            <person name="Kaminker J.S."/>
            <person name="Millburn G.H."/>
            <person name="Prochnik S.E."/>
            <person name="Smith C.D."/>
            <person name="Tupy J.L."/>
            <person name="Whitfield E.J."/>
            <person name="Bayraktaroglu L."/>
            <person name="Berman B.P."/>
            <person name="Bettencourt B.R."/>
            <person name="Celniker S.E."/>
            <person name="de Grey A.D.N.J."/>
            <person name="Drysdale R.A."/>
            <person name="Harris N.L."/>
            <person name="Richter J."/>
            <person name="Russo S."/>
            <person name="Schroeder A.J."/>
            <person name="Shu S.Q."/>
            <person name="Stapleton M."/>
            <person name="Yamada C."/>
            <person name="Ashburner M."/>
            <person name="Gelbart W.M."/>
            <person name="Rubin G.M."/>
            <person name="Lewis S.E."/>
        </authorList>
    </citation>
    <scope>GENOME REANNOTATION</scope>
    <source>
        <strain>Berkeley</strain>
    </source>
</reference>
<reference key="4">
    <citation type="journal article" date="2002" name="Genome Biol.">
        <title>A Drosophila full-length cDNA resource.</title>
        <authorList>
            <person name="Stapleton M."/>
            <person name="Carlson J.W."/>
            <person name="Brokstein P."/>
            <person name="Yu C."/>
            <person name="Champe M."/>
            <person name="George R.A."/>
            <person name="Guarin H."/>
            <person name="Kronmiller B."/>
            <person name="Pacleb J.M."/>
            <person name="Park S."/>
            <person name="Wan K.H."/>
            <person name="Rubin G.M."/>
            <person name="Celniker S.E."/>
        </authorList>
    </citation>
    <scope>NUCLEOTIDE SEQUENCE [LARGE SCALE MRNA]</scope>
    <source>
        <strain>Berkeley</strain>
        <tissue>Embryo</tissue>
    </source>
</reference>
<reference key="5">
    <citation type="journal article" date="2003" name="Dev. Cell">
        <title>The COP9 signalosome promotes degradation of Cyclin E during early Drosophila oogenesis.</title>
        <authorList>
            <person name="Doronkin S."/>
            <person name="Djagaeva I."/>
            <person name="Beckendorf S.K."/>
        </authorList>
    </citation>
    <scope>FUNCTION OF CSN COMPLEX</scope>
</reference>
<name>CSN3_DROME</name>
<comment type="function">
    <text evidence="3">Component of the COP9 signalosome complex (CSN), a complex involved in various cellular and developmental processes. The CSN complex is an essential regulator of the ubiquitin (Ubl) conjugation pathway by mediating the deneddylation of the cullin subunits of the SCF-type E3 ligase complexes, leading to decrease the Ubl ligase activity of SCF. The CSN complex plays an essential role in oogenesis and embryogenesis and is required for proper photoreceptor R cell differentiation and promote lamina glial cell migration or axon targeting. It also promotes Ubl-dependent degradation of cyclin E (CycE) during early oogenesis.</text>
</comment>
<comment type="subunit">
    <text>Component of the CSN complex, probably composed of CSN1b, alien/CSN2, CSN3, CSN4, CSN5, CSN6, CSN7 and CSN8.</text>
</comment>
<comment type="subcellular location">
    <subcellularLocation>
        <location evidence="5">Cytoplasm</location>
    </subcellularLocation>
    <subcellularLocation>
        <location evidence="5">Nucleus</location>
    </subcellularLocation>
</comment>
<comment type="similarity">
    <text evidence="4">Belongs to the CSN3 family.</text>
</comment>